<protein>
    <recommendedName>
        <fullName evidence="1">Glycerol kinase</fullName>
        <ecNumber evidence="1">2.7.1.30</ecNumber>
    </recommendedName>
    <alternativeName>
        <fullName evidence="1">ATP:glycerol 3-phosphotransferase</fullName>
    </alternativeName>
    <alternativeName>
        <fullName evidence="1">Glycerokinase</fullName>
        <shortName evidence="1">GK</shortName>
    </alternativeName>
</protein>
<proteinExistence type="inferred from homology"/>
<evidence type="ECO:0000255" key="1">
    <source>
        <dbReference type="HAMAP-Rule" id="MF_00186"/>
    </source>
</evidence>
<accession>A7FX30</accession>
<keyword id="KW-0067">ATP-binding</keyword>
<keyword id="KW-0319">Glycerol metabolism</keyword>
<keyword id="KW-0418">Kinase</keyword>
<keyword id="KW-0547">Nucleotide-binding</keyword>
<keyword id="KW-0808">Transferase</keyword>
<feature type="chain" id="PRO_1000020719" description="Glycerol kinase">
    <location>
        <begin position="1"/>
        <end position="498"/>
    </location>
</feature>
<feature type="binding site" evidence="1">
    <location>
        <position position="12"/>
    </location>
    <ligand>
        <name>ADP</name>
        <dbReference type="ChEBI" id="CHEBI:456216"/>
    </ligand>
</feature>
<feature type="binding site" evidence="1">
    <location>
        <position position="12"/>
    </location>
    <ligand>
        <name>ATP</name>
        <dbReference type="ChEBI" id="CHEBI:30616"/>
    </ligand>
</feature>
<feature type="binding site" evidence="1">
    <location>
        <position position="12"/>
    </location>
    <ligand>
        <name>sn-glycerol 3-phosphate</name>
        <dbReference type="ChEBI" id="CHEBI:57597"/>
    </ligand>
</feature>
<feature type="binding site" evidence="1">
    <location>
        <position position="13"/>
    </location>
    <ligand>
        <name>ATP</name>
        <dbReference type="ChEBI" id="CHEBI:30616"/>
    </ligand>
</feature>
<feature type="binding site" evidence="1">
    <location>
        <position position="14"/>
    </location>
    <ligand>
        <name>ATP</name>
        <dbReference type="ChEBI" id="CHEBI:30616"/>
    </ligand>
</feature>
<feature type="binding site" evidence="1">
    <location>
        <position position="16"/>
    </location>
    <ligand>
        <name>ADP</name>
        <dbReference type="ChEBI" id="CHEBI:456216"/>
    </ligand>
</feature>
<feature type="binding site" evidence="1">
    <location>
        <position position="82"/>
    </location>
    <ligand>
        <name>glycerol</name>
        <dbReference type="ChEBI" id="CHEBI:17754"/>
    </ligand>
</feature>
<feature type="binding site" evidence="1">
    <location>
        <position position="82"/>
    </location>
    <ligand>
        <name>sn-glycerol 3-phosphate</name>
        <dbReference type="ChEBI" id="CHEBI:57597"/>
    </ligand>
</feature>
<feature type="binding site" evidence="1">
    <location>
        <position position="83"/>
    </location>
    <ligand>
        <name>glycerol</name>
        <dbReference type="ChEBI" id="CHEBI:17754"/>
    </ligand>
</feature>
<feature type="binding site" evidence="1">
    <location>
        <position position="83"/>
    </location>
    <ligand>
        <name>sn-glycerol 3-phosphate</name>
        <dbReference type="ChEBI" id="CHEBI:57597"/>
    </ligand>
</feature>
<feature type="binding site" evidence="1">
    <location>
        <position position="134"/>
    </location>
    <ligand>
        <name>glycerol</name>
        <dbReference type="ChEBI" id="CHEBI:17754"/>
    </ligand>
</feature>
<feature type="binding site" evidence="1">
    <location>
        <position position="134"/>
    </location>
    <ligand>
        <name>sn-glycerol 3-phosphate</name>
        <dbReference type="ChEBI" id="CHEBI:57597"/>
    </ligand>
</feature>
<feature type="binding site" evidence="1">
    <location>
        <position position="243"/>
    </location>
    <ligand>
        <name>glycerol</name>
        <dbReference type="ChEBI" id="CHEBI:17754"/>
    </ligand>
</feature>
<feature type="binding site" evidence="1">
    <location>
        <position position="243"/>
    </location>
    <ligand>
        <name>sn-glycerol 3-phosphate</name>
        <dbReference type="ChEBI" id="CHEBI:57597"/>
    </ligand>
</feature>
<feature type="binding site" evidence="1">
    <location>
        <position position="244"/>
    </location>
    <ligand>
        <name>glycerol</name>
        <dbReference type="ChEBI" id="CHEBI:17754"/>
    </ligand>
</feature>
<feature type="binding site" evidence="1">
    <location>
        <position position="265"/>
    </location>
    <ligand>
        <name>ADP</name>
        <dbReference type="ChEBI" id="CHEBI:456216"/>
    </ligand>
</feature>
<feature type="binding site" evidence="1">
    <location>
        <position position="265"/>
    </location>
    <ligand>
        <name>ATP</name>
        <dbReference type="ChEBI" id="CHEBI:30616"/>
    </ligand>
</feature>
<feature type="binding site" evidence="1">
    <location>
        <position position="308"/>
    </location>
    <ligand>
        <name>ADP</name>
        <dbReference type="ChEBI" id="CHEBI:456216"/>
    </ligand>
</feature>
<feature type="binding site" evidence="1">
    <location>
        <position position="308"/>
    </location>
    <ligand>
        <name>ATP</name>
        <dbReference type="ChEBI" id="CHEBI:30616"/>
    </ligand>
</feature>
<feature type="binding site" evidence="1">
    <location>
        <position position="312"/>
    </location>
    <ligand>
        <name>ATP</name>
        <dbReference type="ChEBI" id="CHEBI:30616"/>
    </ligand>
</feature>
<feature type="binding site" evidence="1">
    <location>
        <position position="409"/>
    </location>
    <ligand>
        <name>ADP</name>
        <dbReference type="ChEBI" id="CHEBI:456216"/>
    </ligand>
</feature>
<feature type="binding site" evidence="1">
    <location>
        <position position="409"/>
    </location>
    <ligand>
        <name>ATP</name>
        <dbReference type="ChEBI" id="CHEBI:30616"/>
    </ligand>
</feature>
<feature type="binding site" evidence="1">
    <location>
        <position position="413"/>
    </location>
    <ligand>
        <name>ADP</name>
        <dbReference type="ChEBI" id="CHEBI:456216"/>
    </ligand>
</feature>
<organism>
    <name type="scientific">Clostridium botulinum (strain ATCC 19397 / Type A)</name>
    <dbReference type="NCBI Taxonomy" id="441770"/>
    <lineage>
        <taxon>Bacteria</taxon>
        <taxon>Bacillati</taxon>
        <taxon>Bacillota</taxon>
        <taxon>Clostridia</taxon>
        <taxon>Eubacteriales</taxon>
        <taxon>Clostridiaceae</taxon>
        <taxon>Clostridium</taxon>
    </lineage>
</organism>
<comment type="function">
    <text evidence="1">Key enzyme in the regulation of glycerol uptake and metabolism. Catalyzes the phosphorylation of glycerol to yield sn-glycerol 3-phosphate.</text>
</comment>
<comment type="catalytic activity">
    <reaction evidence="1">
        <text>glycerol + ATP = sn-glycerol 3-phosphate + ADP + H(+)</text>
        <dbReference type="Rhea" id="RHEA:21644"/>
        <dbReference type="ChEBI" id="CHEBI:15378"/>
        <dbReference type="ChEBI" id="CHEBI:17754"/>
        <dbReference type="ChEBI" id="CHEBI:30616"/>
        <dbReference type="ChEBI" id="CHEBI:57597"/>
        <dbReference type="ChEBI" id="CHEBI:456216"/>
        <dbReference type="EC" id="2.7.1.30"/>
    </reaction>
</comment>
<comment type="activity regulation">
    <text evidence="1">Activated by phosphorylation and inhibited by fructose 1,6-bisphosphate (FBP).</text>
</comment>
<comment type="pathway">
    <text evidence="1">Polyol metabolism; glycerol degradation via glycerol kinase pathway; sn-glycerol 3-phosphate from glycerol: step 1/1.</text>
</comment>
<comment type="subunit">
    <text evidence="1">Homotetramer and homodimer (in equilibrium).</text>
</comment>
<comment type="similarity">
    <text evidence="1">Belongs to the FGGY kinase family.</text>
</comment>
<sequence length="498" mass="55391">MEKYIMSLDQGTTSSRCIIFNKKGEIVSVAQKEFTQIYPKAGWVEHDPLEIWGKQAGVAGEALNIARISPEQIAGIGITNQRETTVVWNKRTGMPVYNAIVWQCRRTAGYCDELREKGIDKTIKEKTGLMLDAYFSATKIKWILDNVEGARELAEKGDLLFGNIDTWLIWNMTKGKIHVTDYTNASRTMLFNIHELKWDEELLEILDIPKSMLPEVKPSSCVYGETDEILFGVSIPIAGDAGDQQAALFGQTCFNAGMAKNTYGTGCFLLMNTGEKAVDSKNGLLTTIAVGIDGKVEYALEGSIFIGGAVIQWLRDELRMVKTAQETEKYATEVEDNNGVYLVPAFVGIGAPYWDSYARGTILGLTRGAKKEHIIRAALESMAYQTHDVLKAMEEDSGIELKALKVDGGACQNNFLMQFQSDILGVEVDRPEVVETTALGAAYLAGLAVGYWKDRNEISQNWAISRSFAPAMEDEKKEKLIKGWHKAVTKAMDWEERE</sequence>
<name>GLPK_CLOB1</name>
<gene>
    <name evidence="1" type="primary">glpK</name>
    <name type="ordered locus">CLB_2727</name>
</gene>
<reference key="1">
    <citation type="journal article" date="2007" name="PLoS ONE">
        <title>Analysis of the neurotoxin complex genes in Clostridium botulinum A1-A4 and B1 strains: BoNT/A3, /Ba4 and /B1 clusters are located within plasmids.</title>
        <authorList>
            <person name="Smith T.J."/>
            <person name="Hill K.K."/>
            <person name="Foley B.T."/>
            <person name="Detter J.C."/>
            <person name="Munk A.C."/>
            <person name="Bruce D.C."/>
            <person name="Doggett N.A."/>
            <person name="Smith L.A."/>
            <person name="Marks J.D."/>
            <person name="Xie G."/>
            <person name="Brettin T.S."/>
        </authorList>
    </citation>
    <scope>NUCLEOTIDE SEQUENCE [LARGE SCALE GENOMIC DNA]</scope>
    <source>
        <strain>ATCC 19397 / Type A</strain>
    </source>
</reference>
<dbReference type="EC" id="2.7.1.30" evidence="1"/>
<dbReference type="EMBL" id="CP000726">
    <property type="protein sequence ID" value="ABS35112.1"/>
    <property type="molecule type" value="Genomic_DNA"/>
</dbReference>
<dbReference type="RefSeq" id="WP_011987067.1">
    <property type="nucleotide sequence ID" value="NC_009697.1"/>
</dbReference>
<dbReference type="SMR" id="A7FX30"/>
<dbReference type="GeneID" id="5185396"/>
<dbReference type="KEGG" id="cba:CLB_2727"/>
<dbReference type="HOGENOM" id="CLU_009281_2_3_9"/>
<dbReference type="UniPathway" id="UPA00618">
    <property type="reaction ID" value="UER00672"/>
</dbReference>
<dbReference type="GO" id="GO:0005829">
    <property type="term" value="C:cytosol"/>
    <property type="evidence" value="ECO:0007669"/>
    <property type="project" value="TreeGrafter"/>
</dbReference>
<dbReference type="GO" id="GO:0005524">
    <property type="term" value="F:ATP binding"/>
    <property type="evidence" value="ECO:0007669"/>
    <property type="project" value="UniProtKB-UniRule"/>
</dbReference>
<dbReference type="GO" id="GO:0004370">
    <property type="term" value="F:glycerol kinase activity"/>
    <property type="evidence" value="ECO:0000250"/>
    <property type="project" value="UniProtKB"/>
</dbReference>
<dbReference type="GO" id="GO:0019563">
    <property type="term" value="P:glycerol catabolic process"/>
    <property type="evidence" value="ECO:0007669"/>
    <property type="project" value="UniProtKB-UniRule"/>
</dbReference>
<dbReference type="GO" id="GO:0006071">
    <property type="term" value="P:glycerol metabolic process"/>
    <property type="evidence" value="ECO:0000250"/>
    <property type="project" value="UniProtKB"/>
</dbReference>
<dbReference type="GO" id="GO:0006072">
    <property type="term" value="P:glycerol-3-phosphate metabolic process"/>
    <property type="evidence" value="ECO:0007669"/>
    <property type="project" value="InterPro"/>
</dbReference>
<dbReference type="CDD" id="cd07786">
    <property type="entry name" value="FGGY_EcGK_like"/>
    <property type="match status" value="1"/>
</dbReference>
<dbReference type="FunFam" id="3.30.420.40:FF:000007">
    <property type="entry name" value="Glycerol kinase"/>
    <property type="match status" value="1"/>
</dbReference>
<dbReference type="FunFam" id="3.30.420.40:FF:000008">
    <property type="entry name" value="Glycerol kinase"/>
    <property type="match status" value="1"/>
</dbReference>
<dbReference type="Gene3D" id="3.30.420.40">
    <property type="match status" value="2"/>
</dbReference>
<dbReference type="HAMAP" id="MF_00186">
    <property type="entry name" value="Glycerol_kin"/>
    <property type="match status" value="1"/>
</dbReference>
<dbReference type="InterPro" id="IPR043129">
    <property type="entry name" value="ATPase_NBD"/>
</dbReference>
<dbReference type="InterPro" id="IPR000577">
    <property type="entry name" value="Carb_kinase_FGGY"/>
</dbReference>
<dbReference type="InterPro" id="IPR018483">
    <property type="entry name" value="Carb_kinase_FGGY_CS"/>
</dbReference>
<dbReference type="InterPro" id="IPR018485">
    <property type="entry name" value="FGGY_C"/>
</dbReference>
<dbReference type="InterPro" id="IPR018484">
    <property type="entry name" value="FGGY_N"/>
</dbReference>
<dbReference type="InterPro" id="IPR005999">
    <property type="entry name" value="Glycerol_kin"/>
</dbReference>
<dbReference type="NCBIfam" id="TIGR01311">
    <property type="entry name" value="glycerol_kin"/>
    <property type="match status" value="1"/>
</dbReference>
<dbReference type="NCBIfam" id="NF000756">
    <property type="entry name" value="PRK00047.1"/>
    <property type="match status" value="1"/>
</dbReference>
<dbReference type="PANTHER" id="PTHR10196:SF69">
    <property type="entry name" value="GLYCEROL KINASE"/>
    <property type="match status" value="1"/>
</dbReference>
<dbReference type="PANTHER" id="PTHR10196">
    <property type="entry name" value="SUGAR KINASE"/>
    <property type="match status" value="1"/>
</dbReference>
<dbReference type="Pfam" id="PF02782">
    <property type="entry name" value="FGGY_C"/>
    <property type="match status" value="1"/>
</dbReference>
<dbReference type="Pfam" id="PF00370">
    <property type="entry name" value="FGGY_N"/>
    <property type="match status" value="1"/>
</dbReference>
<dbReference type="PIRSF" id="PIRSF000538">
    <property type="entry name" value="GlpK"/>
    <property type="match status" value="1"/>
</dbReference>
<dbReference type="SUPFAM" id="SSF53067">
    <property type="entry name" value="Actin-like ATPase domain"/>
    <property type="match status" value="2"/>
</dbReference>
<dbReference type="PROSITE" id="PS00933">
    <property type="entry name" value="FGGY_KINASES_1"/>
    <property type="match status" value="1"/>
</dbReference>
<dbReference type="PROSITE" id="PS00445">
    <property type="entry name" value="FGGY_KINASES_2"/>
    <property type="match status" value="1"/>
</dbReference>